<organism>
    <name type="scientific">Brucella anthropi (strain ATCC 49188 / DSM 6882 / CCUG 24695 / JCM 21032 / LMG 3331 / NBRC 15819 / NCTC 12168 / Alc 37)</name>
    <name type="common">Ochrobactrum anthropi</name>
    <dbReference type="NCBI Taxonomy" id="439375"/>
    <lineage>
        <taxon>Bacteria</taxon>
        <taxon>Pseudomonadati</taxon>
        <taxon>Pseudomonadota</taxon>
        <taxon>Alphaproteobacteria</taxon>
        <taxon>Hyphomicrobiales</taxon>
        <taxon>Brucellaceae</taxon>
        <taxon>Brucella/Ochrobactrum group</taxon>
        <taxon>Brucella</taxon>
    </lineage>
</organism>
<evidence type="ECO:0000255" key="1">
    <source>
        <dbReference type="HAMAP-Rule" id="MF_01631"/>
    </source>
</evidence>
<comment type="function">
    <text evidence="1">Catalyzes the last two sequential reactions in the de novo biosynthetic pathway for UDP-N-acetylglucosamine (UDP-GlcNAc). The C-terminal domain catalyzes the transfer of acetyl group from acetyl coenzyme A to glucosamine-1-phosphate (GlcN-1-P) to produce N-acetylglucosamine-1-phosphate (GlcNAc-1-P), which is converted into UDP-GlcNAc by the transfer of uridine 5-monophosphate (from uridine 5-triphosphate), a reaction catalyzed by the N-terminal domain.</text>
</comment>
<comment type="catalytic activity">
    <reaction evidence="1">
        <text>alpha-D-glucosamine 1-phosphate + acetyl-CoA = N-acetyl-alpha-D-glucosamine 1-phosphate + CoA + H(+)</text>
        <dbReference type="Rhea" id="RHEA:13725"/>
        <dbReference type="ChEBI" id="CHEBI:15378"/>
        <dbReference type="ChEBI" id="CHEBI:57287"/>
        <dbReference type="ChEBI" id="CHEBI:57288"/>
        <dbReference type="ChEBI" id="CHEBI:57776"/>
        <dbReference type="ChEBI" id="CHEBI:58516"/>
        <dbReference type="EC" id="2.3.1.157"/>
    </reaction>
</comment>
<comment type="catalytic activity">
    <reaction evidence="1">
        <text>N-acetyl-alpha-D-glucosamine 1-phosphate + UTP + H(+) = UDP-N-acetyl-alpha-D-glucosamine + diphosphate</text>
        <dbReference type="Rhea" id="RHEA:13509"/>
        <dbReference type="ChEBI" id="CHEBI:15378"/>
        <dbReference type="ChEBI" id="CHEBI:33019"/>
        <dbReference type="ChEBI" id="CHEBI:46398"/>
        <dbReference type="ChEBI" id="CHEBI:57705"/>
        <dbReference type="ChEBI" id="CHEBI:57776"/>
        <dbReference type="EC" id="2.7.7.23"/>
    </reaction>
</comment>
<comment type="cofactor">
    <cofactor evidence="1">
        <name>Mg(2+)</name>
        <dbReference type="ChEBI" id="CHEBI:18420"/>
    </cofactor>
    <text evidence="1">Binds 1 Mg(2+) ion per subunit.</text>
</comment>
<comment type="pathway">
    <text evidence="1">Nucleotide-sugar biosynthesis; UDP-N-acetyl-alpha-D-glucosamine biosynthesis; N-acetyl-alpha-D-glucosamine 1-phosphate from alpha-D-glucosamine 6-phosphate (route II): step 2/2.</text>
</comment>
<comment type="pathway">
    <text evidence="1">Nucleotide-sugar biosynthesis; UDP-N-acetyl-alpha-D-glucosamine biosynthesis; UDP-N-acetyl-alpha-D-glucosamine from N-acetyl-alpha-D-glucosamine 1-phosphate: step 1/1.</text>
</comment>
<comment type="pathway">
    <text evidence="1">Bacterial outer membrane biogenesis; LPS lipid A biosynthesis.</text>
</comment>
<comment type="subunit">
    <text evidence="1">Homotrimer.</text>
</comment>
<comment type="subcellular location">
    <subcellularLocation>
        <location evidence="1">Cytoplasm</location>
    </subcellularLocation>
</comment>
<comment type="similarity">
    <text evidence="1">In the N-terminal section; belongs to the N-acetylglucosamine-1-phosphate uridyltransferase family.</text>
</comment>
<comment type="similarity">
    <text evidence="1">In the C-terminal section; belongs to the transferase hexapeptide repeat family.</text>
</comment>
<protein>
    <recommendedName>
        <fullName evidence="1">Bifunctional protein GlmU</fullName>
    </recommendedName>
    <domain>
        <recommendedName>
            <fullName evidence="1">UDP-N-acetylglucosamine pyrophosphorylase</fullName>
            <ecNumber evidence="1">2.7.7.23</ecNumber>
        </recommendedName>
        <alternativeName>
            <fullName evidence="1">N-acetylglucosamine-1-phosphate uridyltransferase</fullName>
        </alternativeName>
    </domain>
    <domain>
        <recommendedName>
            <fullName evidence="1">Glucosamine-1-phosphate N-acetyltransferase</fullName>
            <ecNumber evidence="1">2.3.1.157</ecNumber>
        </recommendedName>
    </domain>
</protein>
<feature type="chain" id="PRO_1000056178" description="Bifunctional protein GlmU">
    <location>
        <begin position="1"/>
        <end position="454"/>
    </location>
</feature>
<feature type="region of interest" description="Pyrophosphorylase" evidence="1">
    <location>
        <begin position="1"/>
        <end position="232"/>
    </location>
</feature>
<feature type="region of interest" description="Linker" evidence="1">
    <location>
        <begin position="233"/>
        <end position="253"/>
    </location>
</feature>
<feature type="region of interest" description="N-acetyltransferase" evidence="1">
    <location>
        <begin position="254"/>
        <end position="454"/>
    </location>
</feature>
<feature type="active site" description="Proton acceptor" evidence="1">
    <location>
        <position position="349"/>
    </location>
</feature>
<feature type="binding site" evidence="1">
    <location>
        <begin position="11"/>
        <end position="14"/>
    </location>
    <ligand>
        <name>UDP-N-acetyl-alpha-D-glucosamine</name>
        <dbReference type="ChEBI" id="CHEBI:57705"/>
    </ligand>
</feature>
<feature type="binding site" evidence="1">
    <location>
        <position position="25"/>
    </location>
    <ligand>
        <name>UDP-N-acetyl-alpha-D-glucosamine</name>
        <dbReference type="ChEBI" id="CHEBI:57705"/>
    </ligand>
</feature>
<feature type="binding site" evidence="1">
    <location>
        <position position="78"/>
    </location>
    <ligand>
        <name>UDP-N-acetyl-alpha-D-glucosamine</name>
        <dbReference type="ChEBI" id="CHEBI:57705"/>
    </ligand>
</feature>
<feature type="binding site" evidence="1">
    <location>
        <begin position="83"/>
        <end position="84"/>
    </location>
    <ligand>
        <name>UDP-N-acetyl-alpha-D-glucosamine</name>
        <dbReference type="ChEBI" id="CHEBI:57705"/>
    </ligand>
</feature>
<feature type="binding site" evidence="1">
    <location>
        <position position="108"/>
    </location>
    <ligand>
        <name>Mg(2+)</name>
        <dbReference type="ChEBI" id="CHEBI:18420"/>
    </ligand>
</feature>
<feature type="binding site" evidence="1">
    <location>
        <position position="144"/>
    </location>
    <ligand>
        <name>UDP-N-acetyl-alpha-D-glucosamine</name>
        <dbReference type="ChEBI" id="CHEBI:57705"/>
    </ligand>
</feature>
<feature type="binding site" evidence="1">
    <location>
        <position position="158"/>
    </location>
    <ligand>
        <name>UDP-N-acetyl-alpha-D-glucosamine</name>
        <dbReference type="ChEBI" id="CHEBI:57705"/>
    </ligand>
</feature>
<feature type="binding site" evidence="1">
    <location>
        <position position="173"/>
    </location>
    <ligand>
        <name>UDP-N-acetyl-alpha-D-glucosamine</name>
        <dbReference type="ChEBI" id="CHEBI:57705"/>
    </ligand>
</feature>
<feature type="binding site" evidence="1">
    <location>
        <position position="230"/>
    </location>
    <ligand>
        <name>Mg(2+)</name>
        <dbReference type="ChEBI" id="CHEBI:18420"/>
    </ligand>
</feature>
<feature type="binding site" evidence="1">
    <location>
        <position position="230"/>
    </location>
    <ligand>
        <name>UDP-N-acetyl-alpha-D-glucosamine</name>
        <dbReference type="ChEBI" id="CHEBI:57705"/>
    </ligand>
</feature>
<feature type="binding site" evidence="1">
    <location>
        <position position="319"/>
    </location>
    <ligand>
        <name>UDP-N-acetyl-alpha-D-glucosamine</name>
        <dbReference type="ChEBI" id="CHEBI:57705"/>
    </ligand>
</feature>
<feature type="binding site" evidence="1">
    <location>
        <position position="337"/>
    </location>
    <ligand>
        <name>UDP-N-acetyl-alpha-D-glucosamine</name>
        <dbReference type="ChEBI" id="CHEBI:57705"/>
    </ligand>
</feature>
<feature type="binding site" evidence="1">
    <location>
        <position position="352"/>
    </location>
    <ligand>
        <name>UDP-N-acetyl-alpha-D-glucosamine</name>
        <dbReference type="ChEBI" id="CHEBI:57705"/>
    </ligand>
</feature>
<feature type="binding site" evidence="1">
    <location>
        <position position="363"/>
    </location>
    <ligand>
        <name>UDP-N-acetyl-alpha-D-glucosamine</name>
        <dbReference type="ChEBI" id="CHEBI:57705"/>
    </ligand>
</feature>
<feature type="binding site" evidence="1">
    <location>
        <position position="366"/>
    </location>
    <ligand>
        <name>acetyl-CoA</name>
        <dbReference type="ChEBI" id="CHEBI:57288"/>
    </ligand>
</feature>
<feature type="binding site" evidence="1">
    <location>
        <begin position="372"/>
        <end position="373"/>
    </location>
    <ligand>
        <name>acetyl-CoA</name>
        <dbReference type="ChEBI" id="CHEBI:57288"/>
    </ligand>
</feature>
<feature type="binding site" evidence="1">
    <location>
        <position position="391"/>
    </location>
    <ligand>
        <name>acetyl-CoA</name>
        <dbReference type="ChEBI" id="CHEBI:57288"/>
    </ligand>
</feature>
<feature type="binding site" evidence="1">
    <location>
        <position position="409"/>
    </location>
    <ligand>
        <name>acetyl-CoA</name>
        <dbReference type="ChEBI" id="CHEBI:57288"/>
    </ligand>
</feature>
<feature type="binding site" evidence="1">
    <location>
        <position position="426"/>
    </location>
    <ligand>
        <name>acetyl-CoA</name>
        <dbReference type="ChEBI" id="CHEBI:57288"/>
    </ligand>
</feature>
<proteinExistence type="inferred from homology"/>
<reference key="1">
    <citation type="journal article" date="2011" name="J. Bacteriol.">
        <title>Genome of Ochrobactrum anthropi ATCC 49188 T, a versatile opportunistic pathogen and symbiont of several eukaryotic hosts.</title>
        <authorList>
            <person name="Chain P.S."/>
            <person name="Lang D.M."/>
            <person name="Comerci D.J."/>
            <person name="Malfatti S.A."/>
            <person name="Vergez L.M."/>
            <person name="Shin M."/>
            <person name="Ugalde R.A."/>
            <person name="Garcia E."/>
            <person name="Tolmasky M.E."/>
        </authorList>
    </citation>
    <scope>NUCLEOTIDE SEQUENCE [LARGE SCALE GENOMIC DNA]</scope>
    <source>
        <strain>ATCC 49188 / DSM 6882 / CCUG 24695 / JCM 21032 / LMG 3331 / NBRC 15819 / NCTC 12168 / Alc 37</strain>
    </source>
</reference>
<keyword id="KW-0012">Acyltransferase</keyword>
<keyword id="KW-0133">Cell shape</keyword>
<keyword id="KW-0961">Cell wall biogenesis/degradation</keyword>
<keyword id="KW-0963">Cytoplasm</keyword>
<keyword id="KW-0460">Magnesium</keyword>
<keyword id="KW-0479">Metal-binding</keyword>
<keyword id="KW-0511">Multifunctional enzyme</keyword>
<keyword id="KW-0548">Nucleotidyltransferase</keyword>
<keyword id="KW-0573">Peptidoglycan synthesis</keyword>
<keyword id="KW-1185">Reference proteome</keyword>
<keyword id="KW-0677">Repeat</keyword>
<keyword id="KW-0808">Transferase</keyword>
<gene>
    <name evidence="1" type="primary">glmU</name>
    <name type="ordered locus">Oant_3644</name>
</gene>
<accession>A6X546</accession>
<sequence length="454" mass="48343">MTDRTCLSIVLAAGEGTRMKSNLPKVLHQVAGLPLVSHVVTAVQGTGKSDIALVVGRGADDVRAAVEKNAGPVSAFEQKERLGTAHAVLAAREAIERGYDDLLIVFGDTPLIEAQSLQKARERLAEGADVVVIGFRPDNPHGYGRLIEKGDKLVAIIEEKEATEEQKQIGFCNGGLMAVRGQHALALLDAVGNDNAKGEYYLTDIVAIAHSKGMNVTAIEVPVDNVIGINNRVELAEAEAIWQQRKRREMMLAGVTLIAPETVFFSHDTLIEADVIVEPNVFFGPRVHVATGALIHSFSHMEGAYVGPKAEIGPFARLRPGANLGEKTKVGNFCEVKNATVHKGAKINHLTYIGDATVGASSNIGAGTITCNYDGYNKYKTVIGENAFIGSNSSLVAPVEIGDNAYIASGSTITDNVPADALAFGRARQETKEGRAKILREKYAAIKAAKTATK</sequence>
<name>GLMU_BRUA4</name>
<dbReference type="EC" id="2.7.7.23" evidence="1"/>
<dbReference type="EC" id="2.3.1.157" evidence="1"/>
<dbReference type="EMBL" id="CP000759">
    <property type="protein sequence ID" value="ABS16350.1"/>
    <property type="molecule type" value="Genomic_DNA"/>
</dbReference>
<dbReference type="RefSeq" id="WP_012093028.1">
    <property type="nucleotide sequence ID" value="NC_009668.1"/>
</dbReference>
<dbReference type="SMR" id="A6X546"/>
<dbReference type="STRING" id="439375.Oant_3644"/>
<dbReference type="KEGG" id="oan:Oant_3644"/>
<dbReference type="PATRIC" id="fig|439375.7.peg.3805"/>
<dbReference type="eggNOG" id="COG1207">
    <property type="taxonomic scope" value="Bacteria"/>
</dbReference>
<dbReference type="HOGENOM" id="CLU_029499_15_2_5"/>
<dbReference type="UniPathway" id="UPA00113">
    <property type="reaction ID" value="UER00532"/>
</dbReference>
<dbReference type="UniPathway" id="UPA00113">
    <property type="reaction ID" value="UER00533"/>
</dbReference>
<dbReference type="UniPathway" id="UPA00973"/>
<dbReference type="Proteomes" id="UP000002301">
    <property type="component" value="Chromosome 2"/>
</dbReference>
<dbReference type="GO" id="GO:0005737">
    <property type="term" value="C:cytoplasm"/>
    <property type="evidence" value="ECO:0007669"/>
    <property type="project" value="UniProtKB-SubCell"/>
</dbReference>
<dbReference type="GO" id="GO:0016020">
    <property type="term" value="C:membrane"/>
    <property type="evidence" value="ECO:0007669"/>
    <property type="project" value="GOC"/>
</dbReference>
<dbReference type="GO" id="GO:0019134">
    <property type="term" value="F:glucosamine-1-phosphate N-acetyltransferase activity"/>
    <property type="evidence" value="ECO:0007669"/>
    <property type="project" value="UniProtKB-UniRule"/>
</dbReference>
<dbReference type="GO" id="GO:0000287">
    <property type="term" value="F:magnesium ion binding"/>
    <property type="evidence" value="ECO:0007669"/>
    <property type="project" value="UniProtKB-UniRule"/>
</dbReference>
<dbReference type="GO" id="GO:0003977">
    <property type="term" value="F:UDP-N-acetylglucosamine diphosphorylase activity"/>
    <property type="evidence" value="ECO:0007669"/>
    <property type="project" value="UniProtKB-UniRule"/>
</dbReference>
<dbReference type="GO" id="GO:0000902">
    <property type="term" value="P:cell morphogenesis"/>
    <property type="evidence" value="ECO:0007669"/>
    <property type="project" value="UniProtKB-UniRule"/>
</dbReference>
<dbReference type="GO" id="GO:0071555">
    <property type="term" value="P:cell wall organization"/>
    <property type="evidence" value="ECO:0007669"/>
    <property type="project" value="UniProtKB-KW"/>
</dbReference>
<dbReference type="GO" id="GO:0009245">
    <property type="term" value="P:lipid A biosynthetic process"/>
    <property type="evidence" value="ECO:0007669"/>
    <property type="project" value="UniProtKB-UniRule"/>
</dbReference>
<dbReference type="GO" id="GO:0009252">
    <property type="term" value="P:peptidoglycan biosynthetic process"/>
    <property type="evidence" value="ECO:0007669"/>
    <property type="project" value="UniProtKB-UniRule"/>
</dbReference>
<dbReference type="GO" id="GO:0008360">
    <property type="term" value="P:regulation of cell shape"/>
    <property type="evidence" value="ECO:0007669"/>
    <property type="project" value="UniProtKB-KW"/>
</dbReference>
<dbReference type="GO" id="GO:0006048">
    <property type="term" value="P:UDP-N-acetylglucosamine biosynthetic process"/>
    <property type="evidence" value="ECO:0007669"/>
    <property type="project" value="UniProtKB-UniPathway"/>
</dbReference>
<dbReference type="CDD" id="cd02540">
    <property type="entry name" value="GT2_GlmU_N_bac"/>
    <property type="match status" value="1"/>
</dbReference>
<dbReference type="CDD" id="cd03353">
    <property type="entry name" value="LbH_GlmU_C"/>
    <property type="match status" value="1"/>
</dbReference>
<dbReference type="Gene3D" id="2.160.10.10">
    <property type="entry name" value="Hexapeptide repeat proteins"/>
    <property type="match status" value="1"/>
</dbReference>
<dbReference type="Gene3D" id="3.90.550.10">
    <property type="entry name" value="Spore Coat Polysaccharide Biosynthesis Protein SpsA, Chain A"/>
    <property type="match status" value="1"/>
</dbReference>
<dbReference type="HAMAP" id="MF_01631">
    <property type="entry name" value="GlmU"/>
    <property type="match status" value="1"/>
</dbReference>
<dbReference type="InterPro" id="IPR005882">
    <property type="entry name" value="Bifunctional_GlmU"/>
</dbReference>
<dbReference type="InterPro" id="IPR050065">
    <property type="entry name" value="GlmU-like"/>
</dbReference>
<dbReference type="InterPro" id="IPR038009">
    <property type="entry name" value="GlmU_C_LbH"/>
</dbReference>
<dbReference type="InterPro" id="IPR001451">
    <property type="entry name" value="Hexapep"/>
</dbReference>
<dbReference type="InterPro" id="IPR018357">
    <property type="entry name" value="Hexapep_transf_CS"/>
</dbReference>
<dbReference type="InterPro" id="IPR025877">
    <property type="entry name" value="MobA-like_NTP_Trfase"/>
</dbReference>
<dbReference type="InterPro" id="IPR029044">
    <property type="entry name" value="Nucleotide-diphossugar_trans"/>
</dbReference>
<dbReference type="InterPro" id="IPR011004">
    <property type="entry name" value="Trimer_LpxA-like_sf"/>
</dbReference>
<dbReference type="NCBIfam" id="TIGR01173">
    <property type="entry name" value="glmU"/>
    <property type="match status" value="1"/>
</dbReference>
<dbReference type="NCBIfam" id="NF010933">
    <property type="entry name" value="PRK14353.1"/>
    <property type="match status" value="1"/>
</dbReference>
<dbReference type="PANTHER" id="PTHR43584:SF3">
    <property type="entry name" value="BIFUNCTIONAL PROTEIN GLMU"/>
    <property type="match status" value="1"/>
</dbReference>
<dbReference type="PANTHER" id="PTHR43584">
    <property type="entry name" value="NUCLEOTIDYL TRANSFERASE"/>
    <property type="match status" value="1"/>
</dbReference>
<dbReference type="Pfam" id="PF00132">
    <property type="entry name" value="Hexapep"/>
    <property type="match status" value="1"/>
</dbReference>
<dbReference type="Pfam" id="PF12804">
    <property type="entry name" value="NTP_transf_3"/>
    <property type="match status" value="1"/>
</dbReference>
<dbReference type="SUPFAM" id="SSF53448">
    <property type="entry name" value="Nucleotide-diphospho-sugar transferases"/>
    <property type="match status" value="1"/>
</dbReference>
<dbReference type="SUPFAM" id="SSF51161">
    <property type="entry name" value="Trimeric LpxA-like enzymes"/>
    <property type="match status" value="1"/>
</dbReference>
<dbReference type="PROSITE" id="PS00101">
    <property type="entry name" value="HEXAPEP_TRANSFERASES"/>
    <property type="match status" value="1"/>
</dbReference>